<keyword id="KW-0472">Membrane</keyword>
<keyword id="KW-0576">Peroxisome</keyword>
<keyword id="KW-0962">Peroxisome biogenesis</keyword>
<keyword id="KW-1185">Reference proteome</keyword>
<keyword id="KW-0812">Transmembrane</keyword>
<keyword id="KW-1133">Transmembrane helix</keyword>
<sequence>MTGNRSLVQRHRKKFVVSSVLFATLFATCAITVYFSKRWLYKQHLKMTEQRFVKEQIKRRFVQTQQDSLYTLYELMPVMTLVLAKDFDLDSIVEALKGKKLQKKLSKGEIAGNELENEGLSSGMSAMTPAPSVSAKSPQSADTTSVSETSTKSKAELWDDLKLKAITKIIILSYTTSLLMLLTRLQLNILARREYLDTAINSAMEKEREKKANQYSVLSWFSSWITEKSNNLPSEKADPRNSDGTIDTDTRSIASTANPEKSRYVNEQAFLSLSWWLLNRGYLQYKSIIEQLVKEEFQNSNPRDIMTMDEFSGKISKIFVTTNKQFFQQPQSNEMFISCLLPEPNLERFVLQQTLEQDALKVLYEDNLLLKQLVQETNKCLQSPGTWIVLESLIDETFHTIMEQIEDNVNSKSKPKSNDDDTKVVDISKNSYQIALFSIATKDCTNEMLKAGLVSMNNKFLQKLHSISALDDLSACVYSNFGL</sequence>
<name>PEX3_KLULA</name>
<feature type="chain" id="PRO_0000208743" description="Peroxisomal biogenesis factor 3">
    <location>
        <begin position="1"/>
        <end position="483"/>
    </location>
</feature>
<feature type="topological domain" description="Peroxisomal" evidence="2">
    <location>
        <begin position="1"/>
        <end position="14"/>
    </location>
</feature>
<feature type="transmembrane region" description="Helical" evidence="2">
    <location>
        <begin position="15"/>
        <end position="35"/>
    </location>
</feature>
<feature type="topological domain" description="Cytoplasmic" evidence="2">
    <location>
        <begin position="36"/>
        <end position="483"/>
    </location>
</feature>
<feature type="region of interest" description="Disordered" evidence="3">
    <location>
        <begin position="119"/>
        <end position="149"/>
    </location>
</feature>
<feature type="region of interest" description="Disordered" evidence="3">
    <location>
        <begin position="230"/>
        <end position="253"/>
    </location>
</feature>
<feature type="compositionally biased region" description="Polar residues" evidence="3">
    <location>
        <begin position="242"/>
        <end position="253"/>
    </location>
</feature>
<accession>O94227</accession>
<accession>Q6CMX5</accession>
<reference key="1">
    <citation type="submission" date="1997-07" db="EMBL/GenBank/DDBJ databases">
        <title>Kluyveromyces lactis SKP1 can complement a mutation in CTF13, a gene coding for a centromeric protein of Saccharomyces cerevisiae.</title>
        <authorList>
            <person name="Winkler A."/>
            <person name="Goedegebure R."/>
            <person name="Zonneveld B.J.M."/>
            <person name="Steensma H.Y."/>
            <person name="Hooykaas P.J.J."/>
        </authorList>
    </citation>
    <scope>NUCLEOTIDE SEQUENCE [GENOMIC DNA]</scope>
    <source>
        <strain>ATCC MYA-539 / JBD100</strain>
    </source>
</reference>
<reference key="2">
    <citation type="journal article" date="2004" name="Nature">
        <title>Genome evolution in yeasts.</title>
        <authorList>
            <person name="Dujon B."/>
            <person name="Sherman D."/>
            <person name="Fischer G."/>
            <person name="Durrens P."/>
            <person name="Casaregola S."/>
            <person name="Lafontaine I."/>
            <person name="de Montigny J."/>
            <person name="Marck C."/>
            <person name="Neuveglise C."/>
            <person name="Talla E."/>
            <person name="Goffard N."/>
            <person name="Frangeul L."/>
            <person name="Aigle M."/>
            <person name="Anthouard V."/>
            <person name="Babour A."/>
            <person name="Barbe V."/>
            <person name="Barnay S."/>
            <person name="Blanchin S."/>
            <person name="Beckerich J.-M."/>
            <person name="Beyne E."/>
            <person name="Bleykasten C."/>
            <person name="Boisrame A."/>
            <person name="Boyer J."/>
            <person name="Cattolico L."/>
            <person name="Confanioleri F."/>
            <person name="de Daruvar A."/>
            <person name="Despons L."/>
            <person name="Fabre E."/>
            <person name="Fairhead C."/>
            <person name="Ferry-Dumazet H."/>
            <person name="Groppi A."/>
            <person name="Hantraye F."/>
            <person name="Hennequin C."/>
            <person name="Jauniaux N."/>
            <person name="Joyet P."/>
            <person name="Kachouri R."/>
            <person name="Kerrest A."/>
            <person name="Koszul R."/>
            <person name="Lemaire M."/>
            <person name="Lesur I."/>
            <person name="Ma L."/>
            <person name="Muller H."/>
            <person name="Nicaud J.-M."/>
            <person name="Nikolski M."/>
            <person name="Oztas S."/>
            <person name="Ozier-Kalogeropoulos O."/>
            <person name="Pellenz S."/>
            <person name="Potier S."/>
            <person name="Richard G.-F."/>
            <person name="Straub M.-L."/>
            <person name="Suleau A."/>
            <person name="Swennen D."/>
            <person name="Tekaia F."/>
            <person name="Wesolowski-Louvel M."/>
            <person name="Westhof E."/>
            <person name="Wirth B."/>
            <person name="Zeniou-Meyer M."/>
            <person name="Zivanovic Y."/>
            <person name="Bolotin-Fukuhara M."/>
            <person name="Thierry A."/>
            <person name="Bouchier C."/>
            <person name="Caudron B."/>
            <person name="Scarpelli C."/>
            <person name="Gaillardin C."/>
            <person name="Weissenbach J."/>
            <person name="Wincker P."/>
            <person name="Souciet J.-L."/>
        </authorList>
    </citation>
    <scope>NUCLEOTIDE SEQUENCE [LARGE SCALE GENOMIC DNA]</scope>
    <source>
        <strain>ATCC 8585 / CBS 2359 / DSM 70799 / NBRC 1267 / NRRL Y-1140 / WM37</strain>
    </source>
</reference>
<evidence type="ECO:0000250" key="1"/>
<evidence type="ECO:0000255" key="2"/>
<evidence type="ECO:0000256" key="3">
    <source>
        <dbReference type="SAM" id="MobiDB-lite"/>
    </source>
</evidence>
<evidence type="ECO:0000305" key="4"/>
<organism>
    <name type="scientific">Kluyveromyces lactis (strain ATCC 8585 / CBS 2359 / DSM 70799 / NBRC 1267 / NRRL Y-1140 / WM37)</name>
    <name type="common">Yeast</name>
    <name type="synonym">Candida sphaerica</name>
    <dbReference type="NCBI Taxonomy" id="284590"/>
    <lineage>
        <taxon>Eukaryota</taxon>
        <taxon>Fungi</taxon>
        <taxon>Dikarya</taxon>
        <taxon>Ascomycota</taxon>
        <taxon>Saccharomycotina</taxon>
        <taxon>Saccharomycetes</taxon>
        <taxon>Saccharomycetales</taxon>
        <taxon>Saccharomycetaceae</taxon>
        <taxon>Kluyveromyces</taxon>
    </lineage>
</organism>
<comment type="function">
    <text evidence="1">Involved in peroxisome biosynthesis.</text>
</comment>
<comment type="subcellular location">
    <subcellularLocation>
        <location evidence="1">Peroxisome membrane</location>
        <topology evidence="1">Single-pass membrane protein</topology>
    </subcellularLocation>
</comment>
<comment type="similarity">
    <text evidence="4">Belongs to the peroxin-3 family.</text>
</comment>
<protein>
    <recommendedName>
        <fullName>Peroxisomal biogenesis factor 3</fullName>
    </recommendedName>
    <alternativeName>
        <fullName>Peroxin-3</fullName>
    </alternativeName>
    <alternativeName>
        <fullName>Peroxisomal membrane protein PAS3</fullName>
    </alternativeName>
</protein>
<dbReference type="EMBL" id="AF012338">
    <property type="protein sequence ID" value="AAD01495.1"/>
    <property type="molecule type" value="Genomic_DNA"/>
</dbReference>
<dbReference type="EMBL" id="CR382125">
    <property type="protein sequence ID" value="CAG99801.1"/>
    <property type="molecule type" value="Genomic_DNA"/>
</dbReference>
<dbReference type="RefSeq" id="XP_454714.1">
    <property type="nucleotide sequence ID" value="XM_454714.1"/>
</dbReference>
<dbReference type="SMR" id="O94227"/>
<dbReference type="FunCoup" id="O94227">
    <property type="interactions" value="208"/>
</dbReference>
<dbReference type="STRING" id="284590.O94227"/>
<dbReference type="PaxDb" id="284590-O94227"/>
<dbReference type="KEGG" id="kla:KLLA0_E16963g"/>
<dbReference type="eggNOG" id="KOG4444">
    <property type="taxonomic scope" value="Eukaryota"/>
</dbReference>
<dbReference type="HOGENOM" id="CLU_017002_0_0_1"/>
<dbReference type="InParanoid" id="O94227"/>
<dbReference type="OMA" id="WLYKQQL"/>
<dbReference type="Proteomes" id="UP000000598">
    <property type="component" value="Chromosome E"/>
</dbReference>
<dbReference type="GO" id="GO:0005778">
    <property type="term" value="C:peroxisomal membrane"/>
    <property type="evidence" value="ECO:0007669"/>
    <property type="project" value="UniProtKB-SubCell"/>
</dbReference>
<dbReference type="GO" id="GO:0030674">
    <property type="term" value="F:protein-macromolecule adaptor activity"/>
    <property type="evidence" value="ECO:0007669"/>
    <property type="project" value="TreeGrafter"/>
</dbReference>
<dbReference type="GO" id="GO:0045046">
    <property type="term" value="P:protein import into peroxisome membrane"/>
    <property type="evidence" value="ECO:0007669"/>
    <property type="project" value="TreeGrafter"/>
</dbReference>
<dbReference type="InterPro" id="IPR006966">
    <property type="entry name" value="Peroxin-3"/>
</dbReference>
<dbReference type="PANTHER" id="PTHR28080">
    <property type="entry name" value="PEROXISOMAL BIOGENESIS FACTOR 3"/>
    <property type="match status" value="1"/>
</dbReference>
<dbReference type="PANTHER" id="PTHR28080:SF1">
    <property type="entry name" value="PEROXISOMAL BIOGENESIS FACTOR 3"/>
    <property type="match status" value="1"/>
</dbReference>
<dbReference type="Pfam" id="PF04882">
    <property type="entry name" value="Peroxin-3"/>
    <property type="match status" value="1"/>
</dbReference>
<gene>
    <name type="primary">PEX3</name>
    <name type="synonym">PAS3</name>
    <name type="ordered locus">KLLA0E17017g</name>
</gene>
<proteinExistence type="inferred from homology"/>